<gene>
    <name type="ordered locus">PM1991</name>
</gene>
<protein>
    <recommendedName>
        <fullName>Putative zinc metalloprotease PM1991</fullName>
        <ecNumber>3.4.24.-</ecNumber>
    </recommendedName>
</protein>
<reference key="1">
    <citation type="journal article" date="2001" name="Proc. Natl. Acad. Sci. U.S.A.">
        <title>Complete genomic sequence of Pasteurella multocida Pm70.</title>
        <authorList>
            <person name="May B.J."/>
            <person name="Zhang Q."/>
            <person name="Li L.L."/>
            <person name="Paustian M.L."/>
            <person name="Whittam T.S."/>
            <person name="Kapur V."/>
        </authorList>
    </citation>
    <scope>NUCLEOTIDE SEQUENCE [LARGE SCALE GENOMIC DNA]</scope>
    <source>
        <strain>Pm70</strain>
    </source>
</reference>
<name>Y1991_PASMU</name>
<evidence type="ECO:0000250" key="1"/>
<evidence type="ECO:0000255" key="2"/>
<evidence type="ECO:0000255" key="3">
    <source>
        <dbReference type="PROSITE-ProRule" id="PRU10095"/>
    </source>
</evidence>
<evidence type="ECO:0000305" key="4"/>
<comment type="cofactor">
    <cofactor evidence="4">
        <name>Zn(2+)</name>
        <dbReference type="ChEBI" id="CHEBI:29105"/>
    </cofactor>
</comment>
<comment type="subcellular location">
    <subcellularLocation>
        <location evidence="1">Cell inner membrane</location>
        <topology evidence="1">Multi-pass membrane protein</topology>
    </subcellularLocation>
</comment>
<comment type="similarity">
    <text evidence="4">Belongs to the peptidase M50B family.</text>
</comment>
<sequence length="442" mass="48609">MSFLWSFASFIIVISVLVAVHEYGHFWAARKCGIQVHRFSIGFGKVLWSRTDKQGTEFVISAIPLGGYVKMLDGRNEVVPPELSSRAFDQKSVLQRAFVIAAGPIANFLFAILAYFTIYTVGIPTVKPVIADISSNSIAAQAQIEPNTQIMAVDGTKVSDWETINMLLATKMGNDEIHLTLSPFGSSIEQHKVLNTKDWRFDPEKESAMSSLGLQPVRTKVDMILSKVEVNSPADKAGLKAGDRIYAGEQLISWQQFVQFVQEGKPFNVKVERDGQFSFVVLTPELNKKGRWYVGIAPTAAPISDIYRTELKYGILEALQKGVEKTIQLSWLTIKVIGKLFTGDLALKNLGGPISIAKGAGISSEIGLIYYLGFMALISVNLGIMNLFPLPVLDGGHLVFLAAEAVRGKPLSERIQNLSYRIGAAILMALMGFALFNDFLRL</sequence>
<organism>
    <name type="scientific">Pasteurella multocida (strain Pm70)</name>
    <dbReference type="NCBI Taxonomy" id="272843"/>
    <lineage>
        <taxon>Bacteria</taxon>
        <taxon>Pseudomonadati</taxon>
        <taxon>Pseudomonadota</taxon>
        <taxon>Gammaproteobacteria</taxon>
        <taxon>Pasteurellales</taxon>
        <taxon>Pasteurellaceae</taxon>
        <taxon>Pasteurella</taxon>
    </lineage>
</organism>
<feature type="chain" id="PRO_0000088452" description="Putative zinc metalloprotease PM1991">
    <location>
        <begin position="1"/>
        <end position="442"/>
    </location>
</feature>
<feature type="transmembrane region" description="Helical" evidence="2">
    <location>
        <begin position="97"/>
        <end position="119"/>
    </location>
</feature>
<feature type="transmembrane region" description="Helical" evidence="2">
    <location>
        <begin position="366"/>
        <end position="388"/>
    </location>
</feature>
<feature type="transmembrane region" description="Helical" evidence="2">
    <location>
        <begin position="418"/>
        <end position="440"/>
    </location>
</feature>
<feature type="domain" description="PDZ">
    <location>
        <begin position="198"/>
        <end position="286"/>
    </location>
</feature>
<feature type="active site" evidence="3">
    <location>
        <position position="22"/>
    </location>
</feature>
<feature type="binding site" evidence="3">
    <location>
        <position position="21"/>
    </location>
    <ligand>
        <name>Zn(2+)</name>
        <dbReference type="ChEBI" id="CHEBI:29105"/>
        <note>catalytic</note>
    </ligand>
</feature>
<feature type="binding site" evidence="3">
    <location>
        <position position="25"/>
    </location>
    <ligand>
        <name>Zn(2+)</name>
        <dbReference type="ChEBI" id="CHEBI:29105"/>
        <note>catalytic</note>
    </ligand>
</feature>
<proteinExistence type="inferred from homology"/>
<dbReference type="EC" id="3.4.24.-"/>
<dbReference type="EMBL" id="AE004439">
    <property type="protein sequence ID" value="AAK04075.1"/>
    <property type="molecule type" value="Genomic_DNA"/>
</dbReference>
<dbReference type="SMR" id="Q9CJL2"/>
<dbReference type="STRING" id="272843.PM1991"/>
<dbReference type="EnsemblBacteria" id="AAK04075">
    <property type="protein sequence ID" value="AAK04075"/>
    <property type="gene ID" value="PM1991"/>
</dbReference>
<dbReference type="KEGG" id="pmu:PM1991"/>
<dbReference type="PATRIC" id="fig|272843.6.peg.2014"/>
<dbReference type="HOGENOM" id="CLU_025778_0_2_6"/>
<dbReference type="OrthoDB" id="9782003at2"/>
<dbReference type="Proteomes" id="UP000000809">
    <property type="component" value="Chromosome"/>
</dbReference>
<dbReference type="GO" id="GO:0005886">
    <property type="term" value="C:plasma membrane"/>
    <property type="evidence" value="ECO:0007669"/>
    <property type="project" value="UniProtKB-SubCell"/>
</dbReference>
<dbReference type="GO" id="GO:0046872">
    <property type="term" value="F:metal ion binding"/>
    <property type="evidence" value="ECO:0007669"/>
    <property type="project" value="UniProtKB-KW"/>
</dbReference>
<dbReference type="GO" id="GO:0004222">
    <property type="term" value="F:metalloendopeptidase activity"/>
    <property type="evidence" value="ECO:0007669"/>
    <property type="project" value="InterPro"/>
</dbReference>
<dbReference type="GO" id="GO:0006508">
    <property type="term" value="P:proteolysis"/>
    <property type="evidence" value="ECO:0007669"/>
    <property type="project" value="UniProtKB-KW"/>
</dbReference>
<dbReference type="CDD" id="cd23082">
    <property type="entry name" value="cpPDZ1_EcRseP-like"/>
    <property type="match status" value="1"/>
</dbReference>
<dbReference type="CDD" id="cd23081">
    <property type="entry name" value="cpPDZ_EcRseP-like"/>
    <property type="match status" value="1"/>
</dbReference>
<dbReference type="CDD" id="cd06163">
    <property type="entry name" value="S2P-M50_PDZ_RseP-like"/>
    <property type="match status" value="2"/>
</dbReference>
<dbReference type="Gene3D" id="2.30.42.10">
    <property type="match status" value="2"/>
</dbReference>
<dbReference type="InterPro" id="IPR001478">
    <property type="entry name" value="PDZ"/>
</dbReference>
<dbReference type="InterPro" id="IPR036034">
    <property type="entry name" value="PDZ_sf"/>
</dbReference>
<dbReference type="InterPro" id="IPR004387">
    <property type="entry name" value="Pept_M50_Zn"/>
</dbReference>
<dbReference type="InterPro" id="IPR008915">
    <property type="entry name" value="Peptidase_M50"/>
</dbReference>
<dbReference type="NCBIfam" id="NF008046">
    <property type="entry name" value="PRK10779.1"/>
    <property type="match status" value="1"/>
</dbReference>
<dbReference type="NCBIfam" id="TIGR00054">
    <property type="entry name" value="RIP metalloprotease RseP"/>
    <property type="match status" value="1"/>
</dbReference>
<dbReference type="PANTHER" id="PTHR42837:SF2">
    <property type="entry name" value="MEMBRANE METALLOPROTEASE ARASP2, CHLOROPLASTIC-RELATED"/>
    <property type="match status" value="1"/>
</dbReference>
<dbReference type="PANTHER" id="PTHR42837">
    <property type="entry name" value="REGULATOR OF SIGMA-E PROTEASE RSEP"/>
    <property type="match status" value="1"/>
</dbReference>
<dbReference type="Pfam" id="PF00595">
    <property type="entry name" value="PDZ"/>
    <property type="match status" value="1"/>
</dbReference>
<dbReference type="Pfam" id="PF02163">
    <property type="entry name" value="Peptidase_M50"/>
    <property type="match status" value="1"/>
</dbReference>
<dbReference type="SMART" id="SM00228">
    <property type="entry name" value="PDZ"/>
    <property type="match status" value="2"/>
</dbReference>
<dbReference type="SUPFAM" id="SSF50156">
    <property type="entry name" value="PDZ domain-like"/>
    <property type="match status" value="2"/>
</dbReference>
<dbReference type="PROSITE" id="PS00142">
    <property type="entry name" value="ZINC_PROTEASE"/>
    <property type="match status" value="1"/>
</dbReference>
<accession>Q9CJL2</accession>
<keyword id="KW-0997">Cell inner membrane</keyword>
<keyword id="KW-1003">Cell membrane</keyword>
<keyword id="KW-0378">Hydrolase</keyword>
<keyword id="KW-0472">Membrane</keyword>
<keyword id="KW-0479">Metal-binding</keyword>
<keyword id="KW-0482">Metalloprotease</keyword>
<keyword id="KW-0645">Protease</keyword>
<keyword id="KW-1185">Reference proteome</keyword>
<keyword id="KW-0812">Transmembrane</keyword>
<keyword id="KW-1133">Transmembrane helix</keyword>
<keyword id="KW-0862">Zinc</keyword>